<sequence>MIREEEVFKIGQFAKPHGIKGELSLVTNSDVLEDAEDPYIVCEMDGILVPFFVEDFRYKTDTVVLVKLEDVNSEEDARMFVGKEVFYPLDAVDEEDLVGDMTWDSFIGYTVTDVQKGYLGEITDVDETTINVLLRVDHKGEELLIPAVEELITEADHEARSLTVSLPEGLIDL</sequence>
<evidence type="ECO:0000255" key="1">
    <source>
        <dbReference type="HAMAP-Rule" id="MF_00014"/>
    </source>
</evidence>
<gene>
    <name evidence="1" type="primary">rimM</name>
    <name type="ordered locus">BDI_0478</name>
</gene>
<reference key="1">
    <citation type="journal article" date="2007" name="PLoS Biol.">
        <title>Evolution of symbiotic bacteria in the distal human intestine.</title>
        <authorList>
            <person name="Xu J."/>
            <person name="Mahowald M.A."/>
            <person name="Ley R.E."/>
            <person name="Lozupone C.A."/>
            <person name="Hamady M."/>
            <person name="Martens E.C."/>
            <person name="Henrissat B."/>
            <person name="Coutinho P.M."/>
            <person name="Minx P."/>
            <person name="Latreille P."/>
            <person name="Cordum H."/>
            <person name="Van Brunt A."/>
            <person name="Kim K."/>
            <person name="Fulton R.S."/>
            <person name="Fulton L.A."/>
            <person name="Clifton S.W."/>
            <person name="Wilson R.K."/>
            <person name="Knight R.D."/>
            <person name="Gordon J.I."/>
        </authorList>
    </citation>
    <scope>NUCLEOTIDE SEQUENCE [LARGE SCALE GENOMIC DNA]</scope>
    <source>
        <strain>ATCC 8503 / DSM 20701 / CIP 104284 / JCM 5825 / NCTC 11152</strain>
    </source>
</reference>
<proteinExistence type="inferred from homology"/>
<accession>A6L991</accession>
<comment type="function">
    <text evidence="1">An accessory protein needed during the final step in the assembly of 30S ribosomal subunit, possibly for assembly of the head region. Essential for efficient processing of 16S rRNA. May be needed both before and after RbfA during the maturation of 16S rRNA. It has affinity for free ribosomal 30S subunits but not for 70S ribosomes.</text>
</comment>
<comment type="subunit">
    <text evidence="1">Binds ribosomal protein uS19.</text>
</comment>
<comment type="subcellular location">
    <subcellularLocation>
        <location evidence="1">Cytoplasm</location>
    </subcellularLocation>
</comment>
<comment type="domain">
    <text evidence="1">The PRC barrel domain binds ribosomal protein uS19.</text>
</comment>
<comment type="similarity">
    <text evidence="1">Belongs to the RimM family.</text>
</comment>
<name>RIMM_PARD8</name>
<organism>
    <name type="scientific">Parabacteroides distasonis (strain ATCC 8503 / DSM 20701 / CIP 104284 / JCM 5825 / NCTC 11152)</name>
    <dbReference type="NCBI Taxonomy" id="435591"/>
    <lineage>
        <taxon>Bacteria</taxon>
        <taxon>Pseudomonadati</taxon>
        <taxon>Bacteroidota</taxon>
        <taxon>Bacteroidia</taxon>
        <taxon>Bacteroidales</taxon>
        <taxon>Tannerellaceae</taxon>
        <taxon>Parabacteroides</taxon>
    </lineage>
</organism>
<keyword id="KW-0143">Chaperone</keyword>
<keyword id="KW-0963">Cytoplasm</keyword>
<keyword id="KW-1185">Reference proteome</keyword>
<keyword id="KW-0690">Ribosome biogenesis</keyword>
<keyword id="KW-0698">rRNA processing</keyword>
<feature type="chain" id="PRO_0000351781" description="Ribosome maturation factor RimM">
    <location>
        <begin position="1"/>
        <end position="173"/>
    </location>
</feature>
<feature type="domain" description="PRC barrel" evidence="1">
    <location>
        <begin position="98"/>
        <end position="170"/>
    </location>
</feature>
<dbReference type="EMBL" id="CP000140">
    <property type="protein sequence ID" value="ABR42255.1"/>
    <property type="molecule type" value="Genomic_DNA"/>
</dbReference>
<dbReference type="RefSeq" id="WP_008780929.1">
    <property type="nucleotide sequence ID" value="NZ_LR215978.1"/>
</dbReference>
<dbReference type="SMR" id="A6L991"/>
<dbReference type="STRING" id="435591.BDI_0478"/>
<dbReference type="PaxDb" id="435591-BDI_0478"/>
<dbReference type="KEGG" id="pdi:BDI_0478"/>
<dbReference type="eggNOG" id="COG0806">
    <property type="taxonomic scope" value="Bacteria"/>
</dbReference>
<dbReference type="HOGENOM" id="CLU_077636_4_1_10"/>
<dbReference type="BioCyc" id="PDIS435591:G1G5A-493-MONOMER"/>
<dbReference type="Proteomes" id="UP000000566">
    <property type="component" value="Chromosome"/>
</dbReference>
<dbReference type="GO" id="GO:0005737">
    <property type="term" value="C:cytoplasm"/>
    <property type="evidence" value="ECO:0007669"/>
    <property type="project" value="UniProtKB-SubCell"/>
</dbReference>
<dbReference type="GO" id="GO:0005840">
    <property type="term" value="C:ribosome"/>
    <property type="evidence" value="ECO:0007669"/>
    <property type="project" value="InterPro"/>
</dbReference>
<dbReference type="GO" id="GO:0043022">
    <property type="term" value="F:ribosome binding"/>
    <property type="evidence" value="ECO:0007669"/>
    <property type="project" value="InterPro"/>
</dbReference>
<dbReference type="GO" id="GO:0042274">
    <property type="term" value="P:ribosomal small subunit biogenesis"/>
    <property type="evidence" value="ECO:0007669"/>
    <property type="project" value="UniProtKB-UniRule"/>
</dbReference>
<dbReference type="GO" id="GO:0006364">
    <property type="term" value="P:rRNA processing"/>
    <property type="evidence" value="ECO:0007669"/>
    <property type="project" value="UniProtKB-UniRule"/>
</dbReference>
<dbReference type="Gene3D" id="2.30.30.240">
    <property type="entry name" value="PRC-barrel domain"/>
    <property type="match status" value="1"/>
</dbReference>
<dbReference type="Gene3D" id="2.40.30.60">
    <property type="entry name" value="RimM"/>
    <property type="match status" value="1"/>
</dbReference>
<dbReference type="HAMAP" id="MF_00014">
    <property type="entry name" value="Ribosome_mat_RimM"/>
    <property type="match status" value="1"/>
</dbReference>
<dbReference type="InterPro" id="IPR011033">
    <property type="entry name" value="PRC_barrel-like_sf"/>
</dbReference>
<dbReference type="InterPro" id="IPR056792">
    <property type="entry name" value="PRC_RimM"/>
</dbReference>
<dbReference type="InterPro" id="IPR011961">
    <property type="entry name" value="RimM"/>
</dbReference>
<dbReference type="InterPro" id="IPR002676">
    <property type="entry name" value="RimM_N"/>
</dbReference>
<dbReference type="InterPro" id="IPR036976">
    <property type="entry name" value="RimM_N_sf"/>
</dbReference>
<dbReference type="InterPro" id="IPR009000">
    <property type="entry name" value="Transl_B-barrel_sf"/>
</dbReference>
<dbReference type="NCBIfam" id="TIGR02273">
    <property type="entry name" value="16S_RimM"/>
    <property type="match status" value="1"/>
</dbReference>
<dbReference type="PANTHER" id="PTHR33692">
    <property type="entry name" value="RIBOSOME MATURATION FACTOR RIMM"/>
    <property type="match status" value="1"/>
</dbReference>
<dbReference type="PANTHER" id="PTHR33692:SF1">
    <property type="entry name" value="RIBOSOME MATURATION FACTOR RIMM"/>
    <property type="match status" value="1"/>
</dbReference>
<dbReference type="Pfam" id="PF24986">
    <property type="entry name" value="PRC_RimM"/>
    <property type="match status" value="1"/>
</dbReference>
<dbReference type="Pfam" id="PF01782">
    <property type="entry name" value="RimM"/>
    <property type="match status" value="1"/>
</dbReference>
<dbReference type="SUPFAM" id="SSF50346">
    <property type="entry name" value="PRC-barrel domain"/>
    <property type="match status" value="1"/>
</dbReference>
<dbReference type="SUPFAM" id="SSF50447">
    <property type="entry name" value="Translation proteins"/>
    <property type="match status" value="1"/>
</dbReference>
<protein>
    <recommendedName>
        <fullName evidence="1">Ribosome maturation factor RimM</fullName>
    </recommendedName>
</protein>